<organism>
    <name type="scientific">Escherichia coli O6:K15:H31 (strain 536 / UPEC)</name>
    <dbReference type="NCBI Taxonomy" id="362663"/>
    <lineage>
        <taxon>Bacteria</taxon>
        <taxon>Pseudomonadati</taxon>
        <taxon>Pseudomonadota</taxon>
        <taxon>Gammaproteobacteria</taxon>
        <taxon>Enterobacterales</taxon>
        <taxon>Enterobacteriaceae</taxon>
        <taxon>Escherichia</taxon>
    </lineage>
</organism>
<protein>
    <recommendedName>
        <fullName evidence="2">Multidrug resistance protein MdtL</fullName>
    </recommendedName>
</protein>
<evidence type="ECO:0000255" key="1"/>
<evidence type="ECO:0000255" key="2">
    <source>
        <dbReference type="HAMAP-Rule" id="MF_01530"/>
    </source>
</evidence>
<comment type="function">
    <text evidence="2">Confers resistance to chloramphenicol.</text>
</comment>
<comment type="subcellular location">
    <subcellularLocation>
        <location evidence="2">Cell inner membrane</location>
        <topology evidence="2">Multi-pass membrane protein</topology>
    </subcellularLocation>
</comment>
<comment type="similarity">
    <text evidence="2">Belongs to the major facilitator superfamily. DHA1 family. MdtL (TC 2.A.1.2.22) subfamily.</text>
</comment>
<gene>
    <name evidence="2" type="primary">mdtL</name>
    <name type="ordered locus">ECP_3910</name>
</gene>
<reference key="1">
    <citation type="journal article" date="2006" name="Mol. Microbiol.">
        <title>Role of pathogenicity island-associated integrases in the genome plasticity of uropathogenic Escherichia coli strain 536.</title>
        <authorList>
            <person name="Hochhut B."/>
            <person name="Wilde C."/>
            <person name="Balling G."/>
            <person name="Middendorf B."/>
            <person name="Dobrindt U."/>
            <person name="Brzuszkiewicz E."/>
            <person name="Gottschalk G."/>
            <person name="Carniel E."/>
            <person name="Hacker J."/>
        </authorList>
    </citation>
    <scope>NUCLEOTIDE SEQUENCE [LARGE SCALE GENOMIC DNA]</scope>
    <source>
        <strain>536 / UPEC</strain>
    </source>
</reference>
<dbReference type="EMBL" id="CP000247">
    <property type="protein sequence ID" value="ABG71881.1"/>
    <property type="molecule type" value="Genomic_DNA"/>
</dbReference>
<dbReference type="RefSeq" id="WP_000085966.1">
    <property type="nucleotide sequence ID" value="NC_008253.1"/>
</dbReference>
<dbReference type="SMR" id="Q0TAZ8"/>
<dbReference type="KEGG" id="ecp:ECP_3910"/>
<dbReference type="HOGENOM" id="CLU_001265_47_1_6"/>
<dbReference type="Proteomes" id="UP000009182">
    <property type="component" value="Chromosome"/>
</dbReference>
<dbReference type="GO" id="GO:0005886">
    <property type="term" value="C:plasma membrane"/>
    <property type="evidence" value="ECO:0007669"/>
    <property type="project" value="UniProtKB-SubCell"/>
</dbReference>
<dbReference type="GO" id="GO:0022857">
    <property type="term" value="F:transmembrane transporter activity"/>
    <property type="evidence" value="ECO:0007669"/>
    <property type="project" value="UniProtKB-UniRule"/>
</dbReference>
<dbReference type="GO" id="GO:0046677">
    <property type="term" value="P:response to antibiotic"/>
    <property type="evidence" value="ECO:0007669"/>
    <property type="project" value="UniProtKB-KW"/>
</dbReference>
<dbReference type="CDD" id="cd17320">
    <property type="entry name" value="MFS_MdfA_MDR_like"/>
    <property type="match status" value="1"/>
</dbReference>
<dbReference type="FunFam" id="1.20.1720.10:FF:000003">
    <property type="entry name" value="Multidrug resistance protein MdtL"/>
    <property type="match status" value="1"/>
</dbReference>
<dbReference type="Gene3D" id="1.20.1720.10">
    <property type="entry name" value="Multidrug resistance protein D"/>
    <property type="match status" value="1"/>
</dbReference>
<dbReference type="HAMAP" id="MF_01530">
    <property type="entry name" value="MFS_MdtL"/>
    <property type="match status" value="1"/>
</dbReference>
<dbReference type="InterPro" id="IPR011701">
    <property type="entry name" value="MFS"/>
</dbReference>
<dbReference type="InterPro" id="IPR020846">
    <property type="entry name" value="MFS_dom"/>
</dbReference>
<dbReference type="InterPro" id="IPR050189">
    <property type="entry name" value="MFS_Efflux_Transporters"/>
</dbReference>
<dbReference type="InterPro" id="IPR036259">
    <property type="entry name" value="MFS_trans_sf"/>
</dbReference>
<dbReference type="InterPro" id="IPR023697">
    <property type="entry name" value="Multidrug-R_MdtL"/>
</dbReference>
<dbReference type="NCBIfam" id="NF007782">
    <property type="entry name" value="PRK10473.1"/>
    <property type="match status" value="1"/>
</dbReference>
<dbReference type="PANTHER" id="PTHR43124:SF3">
    <property type="entry name" value="CHLORAMPHENICOL EFFLUX PUMP RV0191"/>
    <property type="match status" value="1"/>
</dbReference>
<dbReference type="PANTHER" id="PTHR43124">
    <property type="entry name" value="PURINE EFFLUX PUMP PBUE"/>
    <property type="match status" value="1"/>
</dbReference>
<dbReference type="Pfam" id="PF07690">
    <property type="entry name" value="MFS_1"/>
    <property type="match status" value="1"/>
</dbReference>
<dbReference type="SUPFAM" id="SSF103473">
    <property type="entry name" value="MFS general substrate transporter"/>
    <property type="match status" value="1"/>
</dbReference>
<dbReference type="PROSITE" id="PS50850">
    <property type="entry name" value="MFS"/>
    <property type="match status" value="1"/>
</dbReference>
<feature type="chain" id="PRO_0000282000" description="Multidrug resistance protein MdtL">
    <location>
        <begin position="1"/>
        <end position="391"/>
    </location>
</feature>
<feature type="topological domain" description="Cytoplasmic" evidence="1">
    <location>
        <begin position="1"/>
        <end position="3"/>
    </location>
</feature>
<feature type="transmembrane region" description="Helical" evidence="2">
    <location>
        <begin position="4"/>
        <end position="24"/>
    </location>
</feature>
<feature type="topological domain" description="Periplasmic" evidence="1">
    <location>
        <begin position="25"/>
        <end position="41"/>
    </location>
</feature>
<feature type="transmembrane region" description="Helical" evidence="2">
    <location>
        <begin position="42"/>
        <end position="62"/>
    </location>
</feature>
<feature type="topological domain" description="Cytoplasmic" evidence="1">
    <location>
        <begin position="63"/>
        <end position="68"/>
    </location>
</feature>
<feature type="transmembrane region" description="Helical" evidence="2">
    <location>
        <begin position="69"/>
        <end position="89"/>
    </location>
</feature>
<feature type="topological domain" description="Periplasmic" evidence="1">
    <location>
        <begin position="90"/>
        <end position="92"/>
    </location>
</feature>
<feature type="transmembrane region" description="Helical" evidence="2">
    <location>
        <begin position="93"/>
        <end position="113"/>
    </location>
</feature>
<feature type="topological domain" description="Cytoplasmic" evidence="1">
    <location>
        <begin position="114"/>
        <end position="130"/>
    </location>
</feature>
<feature type="transmembrane region" description="Helical" evidence="2">
    <location>
        <begin position="131"/>
        <end position="151"/>
    </location>
</feature>
<feature type="topological domain" description="Periplasmic" evidence="1">
    <location>
        <begin position="152"/>
        <end position="157"/>
    </location>
</feature>
<feature type="transmembrane region" description="Helical" evidence="2">
    <location>
        <begin position="158"/>
        <end position="178"/>
    </location>
</feature>
<feature type="topological domain" description="Cytoplasmic" evidence="1">
    <location>
        <begin position="179"/>
        <end position="202"/>
    </location>
</feature>
<feature type="transmembrane region" description="Helical" evidence="2">
    <location>
        <begin position="203"/>
        <end position="222"/>
    </location>
</feature>
<feature type="topological domain" description="Periplasmic" evidence="1">
    <location>
        <begin position="223"/>
        <end position="244"/>
    </location>
</feature>
<feature type="transmembrane region" description="Helical" evidence="2">
    <location>
        <begin position="245"/>
        <end position="265"/>
    </location>
</feature>
<feature type="topological domain" description="Cytoplasmic" evidence="1">
    <location>
        <begin position="266"/>
        <end position="268"/>
    </location>
</feature>
<feature type="transmembrane region" description="Helical" evidence="2">
    <location>
        <begin position="269"/>
        <end position="289"/>
    </location>
</feature>
<feature type="topological domain" description="Periplasmic" evidence="1">
    <location>
        <begin position="290"/>
        <end position="292"/>
    </location>
</feature>
<feature type="transmembrane region" description="Helical" evidence="2">
    <location>
        <begin position="293"/>
        <end position="313"/>
    </location>
</feature>
<feature type="topological domain" description="Cytoplasmic" evidence="1">
    <location>
        <begin position="314"/>
        <end position="330"/>
    </location>
</feature>
<feature type="transmembrane region" description="Helical" evidence="2">
    <location>
        <begin position="331"/>
        <end position="351"/>
    </location>
</feature>
<feature type="topological domain" description="Periplasmic" evidence="1">
    <location>
        <begin position="352"/>
        <end position="355"/>
    </location>
</feature>
<feature type="transmembrane region" description="Helical" evidence="2">
    <location>
        <begin position="356"/>
        <end position="376"/>
    </location>
</feature>
<feature type="topological domain" description="Cytoplasmic" evidence="1">
    <location>
        <begin position="377"/>
        <end position="391"/>
    </location>
</feature>
<proteinExistence type="inferred from homology"/>
<accession>Q0TAZ8</accession>
<name>MDTL_ECOL5</name>
<sequence>MSRFLICSFALVLLYPAGIDMYLVGLPRIAADLNASEAQLHIAFSVYLAGMAAAMLFAGKVADRSGRKPVAIPGAALFIIASVFCSLAETSALFLAGRFLQGLGAGCCYVVAFAILRDTLDDRRRAKVLSLLNGITCIIPVLAPVLGHLIMLKFPWQSLFWTMATMGIAVLMLSLFILKETRPAAPAASDKPRENSESLLNRFFLSRVVITTLSVSVILTFVNTSPVLLMEIMGFERGEYATIMALTAGVSMTVSFSTPFALGIFKPRTLMITSQVLFLAAGITLAVSPSHAVSLFGITLICAGFSVGFGVAMSQALGPFSLRAGVASSTLGIAQVCGSSLWIWLAAVVGIGAWNMLIGILIACSIVSLLLIMFVAPGRPVAAHEEIHHHA</sequence>
<keyword id="KW-0046">Antibiotic resistance</keyword>
<keyword id="KW-0997">Cell inner membrane</keyword>
<keyword id="KW-1003">Cell membrane</keyword>
<keyword id="KW-0472">Membrane</keyword>
<keyword id="KW-0812">Transmembrane</keyword>
<keyword id="KW-1133">Transmembrane helix</keyword>
<keyword id="KW-0813">Transport</keyword>